<comment type="function">
    <text evidence="1">Catalyzes a proton abstraction reaction that results in 2,5-elimination of pyruvate from 2-succinyl-5-enolpyruvyl-6-hydroxy-3-cyclohexene-1-carboxylate (SEPHCHC) and the formation of 2-succinyl-6-hydroxy-2,4-cyclohexadiene-1-carboxylate (SHCHC).</text>
</comment>
<comment type="catalytic activity">
    <reaction evidence="1">
        <text>5-enolpyruvoyl-6-hydroxy-2-succinyl-cyclohex-3-ene-1-carboxylate = (1R,6R)-6-hydroxy-2-succinyl-cyclohexa-2,4-diene-1-carboxylate + pyruvate</text>
        <dbReference type="Rhea" id="RHEA:25597"/>
        <dbReference type="ChEBI" id="CHEBI:15361"/>
        <dbReference type="ChEBI" id="CHEBI:58689"/>
        <dbReference type="ChEBI" id="CHEBI:58818"/>
        <dbReference type="EC" id="4.2.99.20"/>
    </reaction>
</comment>
<comment type="pathway">
    <text evidence="1">Quinol/quinone metabolism; 1,4-dihydroxy-2-naphthoate biosynthesis; 1,4-dihydroxy-2-naphthoate from chorismate: step 3/7.</text>
</comment>
<comment type="pathway">
    <text evidence="1">Quinol/quinone metabolism; menaquinone biosynthesis.</text>
</comment>
<comment type="subunit">
    <text evidence="1">Monomer.</text>
</comment>
<comment type="similarity">
    <text evidence="1">Belongs to the AB hydrolase superfamily. MenH family.</text>
</comment>
<dbReference type="EC" id="4.2.99.20" evidence="1"/>
<dbReference type="EMBL" id="CU928163">
    <property type="protein sequence ID" value="CAR13788.1"/>
    <property type="molecule type" value="Genomic_DNA"/>
</dbReference>
<dbReference type="RefSeq" id="WP_000600521.1">
    <property type="nucleotide sequence ID" value="NC_011751.1"/>
</dbReference>
<dbReference type="RefSeq" id="YP_002413316.1">
    <property type="nucleotide sequence ID" value="NC_011751.1"/>
</dbReference>
<dbReference type="SMR" id="B7N5M9"/>
<dbReference type="STRING" id="585056.ECUMN_2606"/>
<dbReference type="ESTHER" id="ecoli-YFBB">
    <property type="family name" value="MenH_SHCHC"/>
</dbReference>
<dbReference type="MEROPS" id="S33.996"/>
<dbReference type="KEGG" id="eum:ECUMN_2606"/>
<dbReference type="PATRIC" id="fig|585056.7.peg.2786"/>
<dbReference type="HOGENOM" id="CLU_020336_38_2_6"/>
<dbReference type="UniPathway" id="UPA00079"/>
<dbReference type="UniPathway" id="UPA01057">
    <property type="reaction ID" value="UER00900"/>
</dbReference>
<dbReference type="Proteomes" id="UP000007097">
    <property type="component" value="Chromosome"/>
</dbReference>
<dbReference type="GO" id="GO:0070205">
    <property type="term" value="F:2-succinyl-6-hydroxy-2,4-cyclohexadiene-1-carboxylate synthase activity"/>
    <property type="evidence" value="ECO:0007669"/>
    <property type="project" value="UniProtKB-UniRule"/>
</dbReference>
<dbReference type="GO" id="GO:0009234">
    <property type="term" value="P:menaquinone biosynthetic process"/>
    <property type="evidence" value="ECO:0007669"/>
    <property type="project" value="UniProtKB-UniRule"/>
</dbReference>
<dbReference type="FunFam" id="3.40.50.1820:FF:000038">
    <property type="entry name" value="2-succinyl-6-hydroxy-2,4-cyclohexadiene-1-carboxylate synthase"/>
    <property type="match status" value="1"/>
</dbReference>
<dbReference type="Gene3D" id="3.40.50.1820">
    <property type="entry name" value="alpha/beta hydrolase"/>
    <property type="match status" value="1"/>
</dbReference>
<dbReference type="HAMAP" id="MF_01660">
    <property type="entry name" value="MenH"/>
    <property type="match status" value="1"/>
</dbReference>
<dbReference type="InterPro" id="IPR000073">
    <property type="entry name" value="AB_hydrolase_1"/>
</dbReference>
<dbReference type="InterPro" id="IPR029058">
    <property type="entry name" value="AB_hydrolase_fold"/>
</dbReference>
<dbReference type="InterPro" id="IPR022485">
    <property type="entry name" value="SHCHC_synthase_MenH"/>
</dbReference>
<dbReference type="NCBIfam" id="TIGR03695">
    <property type="entry name" value="menH_SHCHC"/>
    <property type="match status" value="1"/>
</dbReference>
<dbReference type="NCBIfam" id="NF008340">
    <property type="entry name" value="PRK11126.1"/>
    <property type="match status" value="1"/>
</dbReference>
<dbReference type="PANTHER" id="PTHR42916">
    <property type="entry name" value="2-SUCCINYL-5-ENOLPYRUVYL-6-HYDROXY-3-CYCLOHEXENE-1-CARBOXYLATE SYNTHASE"/>
    <property type="match status" value="1"/>
</dbReference>
<dbReference type="PANTHER" id="PTHR42916:SF1">
    <property type="entry name" value="PROTEIN PHYLLO, CHLOROPLASTIC"/>
    <property type="match status" value="1"/>
</dbReference>
<dbReference type="Pfam" id="PF12697">
    <property type="entry name" value="Abhydrolase_6"/>
    <property type="match status" value="1"/>
</dbReference>
<dbReference type="SUPFAM" id="SSF53474">
    <property type="entry name" value="alpha/beta-Hydrolases"/>
    <property type="match status" value="1"/>
</dbReference>
<keyword id="KW-0456">Lyase</keyword>
<keyword id="KW-0474">Menaquinone biosynthesis</keyword>
<name>MENH_ECOLU</name>
<protein>
    <recommendedName>
        <fullName evidence="1">2-succinyl-6-hydroxy-2,4-cyclohexadiene-1-carboxylate synthase</fullName>
        <shortName evidence="1">SHCHC synthase</shortName>
        <ecNumber evidence="1">4.2.99.20</ecNumber>
    </recommendedName>
</protein>
<organism>
    <name type="scientific">Escherichia coli O17:K52:H18 (strain UMN026 / ExPEC)</name>
    <dbReference type="NCBI Taxonomy" id="585056"/>
    <lineage>
        <taxon>Bacteria</taxon>
        <taxon>Pseudomonadati</taxon>
        <taxon>Pseudomonadota</taxon>
        <taxon>Gammaproteobacteria</taxon>
        <taxon>Enterobacterales</taxon>
        <taxon>Enterobacteriaceae</taxon>
        <taxon>Escherichia</taxon>
    </lineage>
</organism>
<gene>
    <name evidence="1" type="primary">menH</name>
    <name type="ordered locus">ECUMN_2606</name>
</gene>
<feature type="chain" id="PRO_1000187110" description="2-succinyl-6-hydroxy-2,4-cyclohexadiene-1-carboxylate synthase">
    <location>
        <begin position="1"/>
        <end position="252"/>
    </location>
</feature>
<proteinExistence type="inferred from homology"/>
<sequence length="252" mass="27805">MILHAQAKHGKPGLPWLVFLHGFSGDCHEWQEVGEAFADYSRLYVDLPGHGGSATISVDGFDDVTDLLCKTLVSYNILNFWLVGYSLGGRVAMMAACQELAGLCGVVVEGGHPGLQNAEQRAERQRSDRQWAQRFRTEPLTAVFADWYQQPVFTSLNDDQRRELVALRSNNNGTTLAAMLEATSLAVQPDLRANLSARTFAFYYLCGERDSKFRALAAELAAECHVIPRAGHNAHRENPAGVIASLAQILRF</sequence>
<accession>B7N5M9</accession>
<evidence type="ECO:0000255" key="1">
    <source>
        <dbReference type="HAMAP-Rule" id="MF_01660"/>
    </source>
</evidence>
<reference key="1">
    <citation type="journal article" date="2009" name="PLoS Genet.">
        <title>Organised genome dynamics in the Escherichia coli species results in highly diverse adaptive paths.</title>
        <authorList>
            <person name="Touchon M."/>
            <person name="Hoede C."/>
            <person name="Tenaillon O."/>
            <person name="Barbe V."/>
            <person name="Baeriswyl S."/>
            <person name="Bidet P."/>
            <person name="Bingen E."/>
            <person name="Bonacorsi S."/>
            <person name="Bouchier C."/>
            <person name="Bouvet O."/>
            <person name="Calteau A."/>
            <person name="Chiapello H."/>
            <person name="Clermont O."/>
            <person name="Cruveiller S."/>
            <person name="Danchin A."/>
            <person name="Diard M."/>
            <person name="Dossat C."/>
            <person name="Karoui M.E."/>
            <person name="Frapy E."/>
            <person name="Garry L."/>
            <person name="Ghigo J.M."/>
            <person name="Gilles A.M."/>
            <person name="Johnson J."/>
            <person name="Le Bouguenec C."/>
            <person name="Lescat M."/>
            <person name="Mangenot S."/>
            <person name="Martinez-Jehanne V."/>
            <person name="Matic I."/>
            <person name="Nassif X."/>
            <person name="Oztas S."/>
            <person name="Petit M.A."/>
            <person name="Pichon C."/>
            <person name="Rouy Z."/>
            <person name="Ruf C.S."/>
            <person name="Schneider D."/>
            <person name="Tourret J."/>
            <person name="Vacherie B."/>
            <person name="Vallenet D."/>
            <person name="Medigue C."/>
            <person name="Rocha E.P.C."/>
            <person name="Denamur E."/>
        </authorList>
    </citation>
    <scope>NUCLEOTIDE SEQUENCE [LARGE SCALE GENOMIC DNA]</scope>
    <source>
        <strain>UMN026 / ExPEC</strain>
    </source>
</reference>